<comment type="function">
    <text evidence="1">Functions by promoting the formation of the first peptide bond.</text>
</comment>
<comment type="subcellular location">
    <subcellularLocation>
        <location evidence="1">Cytoplasm</location>
    </subcellularLocation>
</comment>
<comment type="similarity">
    <text evidence="1">Belongs to the eIF-5A family.</text>
</comment>
<feature type="chain" id="PRO_0000259433" description="Translation initiation factor 5A">
    <location>
        <begin position="1"/>
        <end position="126"/>
    </location>
</feature>
<feature type="modified residue" description="Hypusine" evidence="1">
    <location>
        <position position="36"/>
    </location>
</feature>
<dbReference type="EMBL" id="AY596297">
    <property type="protein sequence ID" value="AAV46800.1"/>
    <property type="molecule type" value="Genomic_DNA"/>
</dbReference>
<dbReference type="RefSeq" id="WP_004515075.1">
    <property type="nucleotide sequence ID" value="NZ_CP039138.1"/>
</dbReference>
<dbReference type="SMR" id="Q5V103"/>
<dbReference type="STRING" id="272569.rrnAC1929"/>
<dbReference type="PaxDb" id="272569-rrnAC1929"/>
<dbReference type="EnsemblBacteria" id="AAV46800">
    <property type="protein sequence ID" value="AAV46800"/>
    <property type="gene ID" value="rrnAC1929"/>
</dbReference>
<dbReference type="KEGG" id="hma:rrnAC1929"/>
<dbReference type="PATRIC" id="fig|272569.17.peg.2585"/>
<dbReference type="eggNOG" id="arCOG04277">
    <property type="taxonomic scope" value="Archaea"/>
</dbReference>
<dbReference type="HOGENOM" id="CLU_102600_3_0_2"/>
<dbReference type="Proteomes" id="UP000001169">
    <property type="component" value="Chromosome I"/>
</dbReference>
<dbReference type="GO" id="GO:0005737">
    <property type="term" value="C:cytoplasm"/>
    <property type="evidence" value="ECO:0007669"/>
    <property type="project" value="UniProtKB-SubCell"/>
</dbReference>
<dbReference type="GO" id="GO:0043022">
    <property type="term" value="F:ribosome binding"/>
    <property type="evidence" value="ECO:0007669"/>
    <property type="project" value="InterPro"/>
</dbReference>
<dbReference type="GO" id="GO:0003723">
    <property type="term" value="F:RNA binding"/>
    <property type="evidence" value="ECO:0007669"/>
    <property type="project" value="InterPro"/>
</dbReference>
<dbReference type="GO" id="GO:0003746">
    <property type="term" value="F:translation elongation factor activity"/>
    <property type="evidence" value="ECO:0007669"/>
    <property type="project" value="InterPro"/>
</dbReference>
<dbReference type="GO" id="GO:0003743">
    <property type="term" value="F:translation initiation factor activity"/>
    <property type="evidence" value="ECO:0007669"/>
    <property type="project" value="UniProtKB-UniRule"/>
</dbReference>
<dbReference type="GO" id="GO:0045901">
    <property type="term" value="P:positive regulation of translational elongation"/>
    <property type="evidence" value="ECO:0007669"/>
    <property type="project" value="InterPro"/>
</dbReference>
<dbReference type="GO" id="GO:0045905">
    <property type="term" value="P:positive regulation of translational termination"/>
    <property type="evidence" value="ECO:0007669"/>
    <property type="project" value="InterPro"/>
</dbReference>
<dbReference type="CDD" id="cd04467">
    <property type="entry name" value="S1_aIF5A"/>
    <property type="match status" value="1"/>
</dbReference>
<dbReference type="FunFam" id="2.30.30.30:FF:000038">
    <property type="entry name" value="Translation initiation factor 5A"/>
    <property type="match status" value="1"/>
</dbReference>
<dbReference type="Gene3D" id="2.30.30.30">
    <property type="match status" value="1"/>
</dbReference>
<dbReference type="Gene3D" id="2.40.50.140">
    <property type="entry name" value="Nucleic acid-binding proteins"/>
    <property type="match status" value="1"/>
</dbReference>
<dbReference type="HAMAP" id="MF_00085">
    <property type="entry name" value="eIF_5A"/>
    <property type="match status" value="1"/>
</dbReference>
<dbReference type="InterPro" id="IPR001884">
    <property type="entry name" value="IF5A-like"/>
</dbReference>
<dbReference type="InterPro" id="IPR048670">
    <property type="entry name" value="IF5A-like_N"/>
</dbReference>
<dbReference type="InterPro" id="IPR012340">
    <property type="entry name" value="NA-bd_OB-fold"/>
</dbReference>
<dbReference type="InterPro" id="IPR014722">
    <property type="entry name" value="Rib_uL2_dom2"/>
</dbReference>
<dbReference type="InterPro" id="IPR019769">
    <property type="entry name" value="Trans_elong_IF5A_hypusine_site"/>
</dbReference>
<dbReference type="InterPro" id="IPR022847">
    <property type="entry name" value="Transl_elong_IF5A_arc"/>
</dbReference>
<dbReference type="InterPro" id="IPR020189">
    <property type="entry name" value="Transl_elong_IF5A_C"/>
</dbReference>
<dbReference type="InterPro" id="IPR008991">
    <property type="entry name" value="Translation_prot_SH3-like_sf"/>
</dbReference>
<dbReference type="NCBIfam" id="TIGR00037">
    <property type="entry name" value="eIF_5A"/>
    <property type="match status" value="1"/>
</dbReference>
<dbReference type="NCBIfam" id="NF003076">
    <property type="entry name" value="PRK03999.1"/>
    <property type="match status" value="1"/>
</dbReference>
<dbReference type="PANTHER" id="PTHR11673">
    <property type="entry name" value="TRANSLATION INITIATION FACTOR 5A FAMILY MEMBER"/>
    <property type="match status" value="1"/>
</dbReference>
<dbReference type="Pfam" id="PF21485">
    <property type="entry name" value="IF5A-like_N"/>
    <property type="match status" value="1"/>
</dbReference>
<dbReference type="PIRSF" id="PIRSF003025">
    <property type="entry name" value="eIF5A"/>
    <property type="match status" value="1"/>
</dbReference>
<dbReference type="SMART" id="SM01376">
    <property type="entry name" value="eIF-5a"/>
    <property type="match status" value="1"/>
</dbReference>
<dbReference type="SUPFAM" id="SSF50249">
    <property type="entry name" value="Nucleic acid-binding proteins"/>
    <property type="match status" value="1"/>
</dbReference>
<dbReference type="SUPFAM" id="SSF50104">
    <property type="entry name" value="Translation proteins SH3-like domain"/>
    <property type="match status" value="1"/>
</dbReference>
<dbReference type="PROSITE" id="PS00302">
    <property type="entry name" value="IF5A_HYPUSINE"/>
    <property type="match status" value="1"/>
</dbReference>
<keyword id="KW-0963">Cytoplasm</keyword>
<keyword id="KW-0385">Hypusine</keyword>
<keyword id="KW-0396">Initiation factor</keyword>
<keyword id="KW-0648">Protein biosynthesis</keyword>
<keyword id="KW-1185">Reference proteome</keyword>
<protein>
    <recommendedName>
        <fullName evidence="1">Translation initiation factor 5A</fullName>
    </recommendedName>
    <alternativeName>
        <fullName evidence="1">Hypusine-containing protein</fullName>
    </alternativeName>
    <alternativeName>
        <fullName evidence="1">eIF-5A</fullName>
    </alternativeName>
</protein>
<proteinExistence type="inferred from homology"/>
<evidence type="ECO:0000255" key="1">
    <source>
        <dbReference type="HAMAP-Rule" id="MF_00085"/>
    </source>
</evidence>
<gene>
    <name evidence="1" type="primary">eif5a</name>
    <name type="ordered locus">rrnAC1929</name>
</gene>
<sequence length="126" mass="14314">MAREQTEVRELDEGSYVMIEDTPCKINSYSTAKPGKHGSAKARIDAKGVFDGKKRSLSQPVDAKVWVPIVNRKQGQVVSTDGNDAQVMDLDTYDTFTMRVPEDIDLQPDDEIEYLQYEEQRKITRS</sequence>
<accession>Q5V103</accession>
<reference key="1">
    <citation type="journal article" date="2004" name="Genome Res.">
        <title>Genome sequence of Haloarcula marismortui: a halophilic archaeon from the Dead Sea.</title>
        <authorList>
            <person name="Baliga N.S."/>
            <person name="Bonneau R."/>
            <person name="Facciotti M.T."/>
            <person name="Pan M."/>
            <person name="Glusman G."/>
            <person name="Deutsch E.W."/>
            <person name="Shannon P."/>
            <person name="Chiu Y."/>
            <person name="Weng R.S."/>
            <person name="Gan R.R."/>
            <person name="Hung P."/>
            <person name="Date S.V."/>
            <person name="Marcotte E."/>
            <person name="Hood L."/>
            <person name="Ng W.V."/>
        </authorList>
    </citation>
    <scope>NUCLEOTIDE SEQUENCE [LARGE SCALE GENOMIC DNA]</scope>
    <source>
        <strain>ATCC 43049 / DSM 3752 / JCM 8966 / VKM B-1809</strain>
    </source>
</reference>
<name>IF5A_HALMA</name>
<organism>
    <name type="scientific">Haloarcula marismortui (strain ATCC 43049 / DSM 3752 / JCM 8966 / VKM B-1809)</name>
    <name type="common">Halobacterium marismortui</name>
    <dbReference type="NCBI Taxonomy" id="272569"/>
    <lineage>
        <taxon>Archaea</taxon>
        <taxon>Methanobacteriati</taxon>
        <taxon>Methanobacteriota</taxon>
        <taxon>Stenosarchaea group</taxon>
        <taxon>Halobacteria</taxon>
        <taxon>Halobacteriales</taxon>
        <taxon>Haloarculaceae</taxon>
        <taxon>Haloarcula</taxon>
    </lineage>
</organism>